<keyword id="KW-0165">Cleavage on pair of basic residues</keyword>
<keyword id="KW-0175">Coiled coil</keyword>
<keyword id="KW-1015">Disulfide bond</keyword>
<keyword id="KW-1169">Fusion of virus membrane with host cell membrane</keyword>
<keyword id="KW-1168">Fusion of virus membrane with host membrane</keyword>
<keyword id="KW-0325">Glycoprotein</keyword>
<keyword id="KW-1032">Host cell membrane</keyword>
<keyword id="KW-1043">Host membrane</keyword>
<keyword id="KW-0945">Host-virus interaction</keyword>
<keyword id="KW-0449">Lipoprotein</keyword>
<keyword id="KW-0472">Membrane</keyword>
<keyword id="KW-0564">Palmitate</keyword>
<keyword id="KW-0732">Signal</keyword>
<keyword id="KW-0812">Transmembrane</keyword>
<keyword id="KW-1133">Transmembrane helix</keyword>
<keyword id="KW-1161">Viral attachment to host cell</keyword>
<keyword id="KW-0261">Viral envelope protein</keyword>
<keyword id="KW-1162">Viral penetration into host cytoplasm</keyword>
<keyword id="KW-0946">Virion</keyword>
<keyword id="KW-1160">Virus entry into host cell</keyword>
<organismHost>
    <name type="scientific">Felidae</name>
    <name type="common">cat family</name>
    <dbReference type="NCBI Taxonomy" id="9681"/>
</organismHost>
<comment type="function">
    <text evidence="1">The surface protein (SU) attaches the virus to the host cell by binding to its receptor. This interaction triggers the refolding of the transmembrane protein (TM) and is thought to activate its fusogenic potential by unmasking its fusion peptide. Fusion occurs at the host cell plasma membrane (By similarity).</text>
</comment>
<comment type="function">
    <text evidence="1">The transmembrane protein (TM) acts as a class I viral fusion protein. Under the current model, the protein has at least 3 conformational states: pre-fusion native state, pre-hairpin intermediate state, and post-fusion hairpin state. During viral and target cell membrane fusion, the coiled coil regions (heptad repeats) assume a trimer-of-hairpins structure, positioning the fusion peptide in close proximity to the C-terminal region of the ectodomain. The formation of this structure appears to drive apposition and subsequent fusion of viral and target cell membranes. Membranes fusion leads to delivery of the nucleocapsid into the cytoplasm (By similarity).</text>
</comment>
<comment type="subunit">
    <text evidence="1">The mature envelope protein (Env) consists of a trimer of SU-TM heterodimers attached by a labile interchain disulfide bond.</text>
</comment>
<comment type="subcellular location">
    <molecule>Transmembrane protein</molecule>
    <subcellularLocation>
        <location evidence="1">Virion membrane</location>
        <topology evidence="1">Single-pass type I membrane protein</topology>
    </subcellularLocation>
    <subcellularLocation>
        <location evidence="1">Host cell membrane</location>
        <topology evidence="1">Single-pass type I membrane protein</topology>
    </subcellularLocation>
</comment>
<comment type="subcellular location">
    <molecule>Surface protein</molecule>
    <subcellularLocation>
        <location>Virion membrane</location>
        <topology>Peripheral membrane protein</topology>
    </subcellularLocation>
    <subcellularLocation>
        <location evidence="1">Host cell membrane</location>
        <topology evidence="1">Peripheral membrane protein</topology>
    </subcellularLocation>
    <text evidence="1">The surface protein is not anchored to the viral envelope, but associates with the extravirion surface through its binding to TM. Both proteins are thought to be concentrated at the site of budding and incorporated into the virions possibly by contacts between the cytoplasmic tail of Env and the N-terminus of Gag (By similarity).</text>
</comment>
<comment type="subcellular location">
    <molecule>R-peptide</molecule>
    <subcellularLocation>
        <location evidence="1">Host cell membrane</location>
        <topology evidence="1">Peripheral membrane protein</topology>
    </subcellularLocation>
    <text evidence="1">The R-peptide is membrane-associated through its palmitate.</text>
</comment>
<comment type="domain">
    <text evidence="1">The 17 amino acids long immunosuppressive region is present in many retroviral envelope proteins. Synthetic peptides derived from this relatively conserved sequence inhibit immune function in vitro and in vivo (By similarity).</text>
</comment>
<comment type="PTM">
    <text evidence="1">Specific enzymatic cleavages in vivo yield mature proteins. Envelope glycoproteins are synthesized as an inactive precursor that is N-glycosylated and processed likely by host cell furin or by a furin-like protease in the Golgi to yield the mature SU and TM proteins. The cleavage site between SU and TM requires the minimal sequence [KR]-X-[KR]-R. The R-peptide is released from the C-terminus of the cytoplasmic tail of the TM protein upon particle formation as a result of proteolytic cleavage by the viral protease. Cleavage of this peptide is required for TM to become fusogenic (By similarity).</text>
</comment>
<comment type="PTM">
    <text evidence="1">The CXXC motif is highly conserved across a broad range of retroviral envelope proteins. It is thought to participate in the formation of a labile disulfide bond possibly with the CX6CC motif present in the transmembrane protein. Isomerization of the intersubunit disulfide bond to an SU intrachain disulfide bond is thought to occur upon receptor recognition in order to allow membrane fusion (By similarity).</text>
</comment>
<comment type="PTM">
    <text evidence="1">The transmembrane protein is palmitoylated.</text>
</comment>
<comment type="PTM">
    <text evidence="1">The R-peptide is palmitoylated.</text>
</comment>
<feature type="signal peptide" evidence="2">
    <location>
        <begin position="1"/>
        <end position="34"/>
    </location>
</feature>
<feature type="chain" id="PRO_0000239564" description="Envelope glycoprotein">
    <location>
        <begin position="35"/>
        <end position="642"/>
    </location>
</feature>
<feature type="chain" id="PRO_0000040712" description="Surface protein" evidence="1">
    <location>
        <begin position="35"/>
        <end position="445"/>
    </location>
</feature>
<feature type="chain" id="PRO_0000040713" description="Transmembrane protein" evidence="1">
    <location>
        <begin position="446"/>
        <end position="625"/>
    </location>
</feature>
<feature type="peptide" id="PRO_0000239565" description="R-peptide" evidence="1">
    <location>
        <begin position="626"/>
        <end position="642"/>
    </location>
</feature>
<feature type="topological domain" description="Extracellular" evidence="2">
    <location>
        <begin position="35"/>
        <end position="586"/>
    </location>
</feature>
<feature type="transmembrane region" description="Helical" evidence="2">
    <location>
        <begin position="587"/>
        <end position="607"/>
    </location>
</feature>
<feature type="topological domain" description="Cytoplasmic" evidence="2">
    <location>
        <begin position="608"/>
        <end position="642"/>
    </location>
</feature>
<feature type="region of interest" description="Disordered" evidence="3">
    <location>
        <begin position="233"/>
        <end position="283"/>
    </location>
</feature>
<feature type="region of interest" description="Fusion peptide" evidence="2">
    <location>
        <begin position="448"/>
        <end position="468"/>
    </location>
</feature>
<feature type="region of interest" description="Immunosuppression" evidence="1">
    <location>
        <begin position="514"/>
        <end position="530"/>
    </location>
</feature>
<feature type="coiled-coil region" evidence="2">
    <location>
        <begin position="476"/>
        <end position="525"/>
    </location>
</feature>
<feature type="coiled-coil region" evidence="2">
    <location>
        <begin position="535"/>
        <end position="571"/>
    </location>
</feature>
<feature type="short sequence motif" description="CXXC">
    <location>
        <begin position="312"/>
        <end position="315"/>
    </location>
</feature>
<feature type="short sequence motif" description="CX6CC">
    <location>
        <begin position="531"/>
        <end position="539"/>
    </location>
</feature>
<feature type="compositionally biased region" description="Polar residues" evidence="3">
    <location>
        <begin position="249"/>
        <end position="270"/>
    </location>
</feature>
<feature type="site" description="Cleavage; by host" evidence="1">
    <location>
        <begin position="445"/>
        <end position="446"/>
    </location>
</feature>
<feature type="site" description="Cleavage; by viral protease" evidence="1">
    <location>
        <begin position="625"/>
        <end position="626"/>
    </location>
</feature>
<feature type="lipid moiety-binding region" description="S-palmitoyl cysteine; by host" evidence="1">
    <location>
        <position position="606"/>
    </location>
</feature>
<feature type="glycosylation site" description="N-linked (GlcNAc...) asparagine; by host" evidence="2">
    <location>
        <position position="43"/>
    </location>
</feature>
<feature type="glycosylation site" description="N-linked (GlcNAc...) asparagine; by host" evidence="2">
    <location>
        <position position="58"/>
    </location>
</feature>
<feature type="glycosylation site" description="N-linked (GlcNAc...) asparagine; by host" evidence="2">
    <location>
        <position position="267"/>
    </location>
</feature>
<feature type="glycosylation site" description="N-linked (GlcNAc...) asparagine; by host" evidence="2">
    <location>
        <position position="302"/>
    </location>
</feature>
<feature type="glycosylation site" description="N-linked (GlcNAc...) asparagine; by host" evidence="2">
    <location>
        <position position="307"/>
    </location>
</feature>
<feature type="glycosylation site" description="N-linked (GlcNAc...) asparagine; by host" evidence="2">
    <location>
        <position position="334"/>
    </location>
</feature>
<feature type="glycosylation site" description="N-linked (GlcNAc...) asparagine; by host" evidence="2">
    <location>
        <position position="374"/>
    </location>
</feature>
<feature type="glycosylation site" description="N-linked (GlcNAc...) asparagine; by host" evidence="2">
    <location>
        <position position="390"/>
    </location>
</feature>
<feature type="glycosylation site" description="N-linked (GlcNAc...) asparagine; by host" evidence="2">
    <location>
        <position position="410"/>
    </location>
</feature>
<feature type="disulfide bond" evidence="1">
    <location>
        <begin position="125"/>
        <end position="147"/>
    </location>
</feature>
<feature type="disulfide bond" evidence="1">
    <location>
        <begin position="139"/>
        <end position="152"/>
    </location>
</feature>
<feature type="disulfide bond" description="Interchain (between SU and TM chains, or C-315 with C-339); in linked form" evidence="1">
    <location>
        <begin position="312"/>
        <end position="539"/>
    </location>
</feature>
<feature type="disulfide bond" evidence="1">
    <location>
        <begin position="312"/>
        <end position="315"/>
    </location>
</feature>
<feature type="disulfide bond" evidence="1">
    <location>
        <begin position="531"/>
        <end position="538"/>
    </location>
</feature>
<organism>
    <name type="scientific">Feline leukemia virus (strain A/Glasgow-1)</name>
    <dbReference type="NCBI Taxonomy" id="11769"/>
    <lineage>
        <taxon>Viruses</taxon>
        <taxon>Riboviria</taxon>
        <taxon>Pararnavirae</taxon>
        <taxon>Artverviricota</taxon>
        <taxon>Revtraviricetes</taxon>
        <taxon>Ortervirales</taxon>
        <taxon>Retroviridae</taxon>
        <taxon>Orthoretrovirinae</taxon>
        <taxon>Gammaretrovirus</taxon>
        <taxon>Feline leukemia virus</taxon>
    </lineage>
</organism>
<accession>P08359</accession>
<name>ENV_FLVGL</name>
<evidence type="ECO:0000250" key="1"/>
<evidence type="ECO:0000255" key="2"/>
<evidence type="ECO:0000256" key="3">
    <source>
        <dbReference type="SAM" id="MobiDB-lite"/>
    </source>
</evidence>
<proteinExistence type="inferred from homology"/>
<reference key="1">
    <citation type="journal article" date="1986" name="J. Virol.">
        <title>Nucleotide sequences of a feline leukemia virus subgroup A envelope gene and long terminal repeat and evidence for the recombinational origin of subgroup B viruses.</title>
        <authorList>
            <person name="Stewart M.A."/>
            <person name="Warnock M."/>
            <person name="Wheeler A."/>
            <person name="Wilkie N."/>
            <person name="Mullins J.I."/>
            <person name="Onions D.E."/>
            <person name="Neil J.C."/>
        </authorList>
    </citation>
    <scope>NUCLEOTIDE SEQUENCE [GENOMIC RNA]</scope>
</reference>
<dbReference type="EMBL" id="M12500">
    <property type="protein sequence ID" value="AAA43053.1"/>
    <property type="molecule type" value="Genomic_RNA"/>
</dbReference>
<dbReference type="PIR" id="A24300">
    <property type="entry name" value="VCMVFG"/>
</dbReference>
<dbReference type="SMR" id="P08359"/>
<dbReference type="GlyCosmos" id="P08359">
    <property type="glycosylation" value="9 sites, No reported glycans"/>
</dbReference>
<dbReference type="GO" id="GO:0020002">
    <property type="term" value="C:host cell plasma membrane"/>
    <property type="evidence" value="ECO:0007669"/>
    <property type="project" value="UniProtKB-SubCell"/>
</dbReference>
<dbReference type="GO" id="GO:0016020">
    <property type="term" value="C:membrane"/>
    <property type="evidence" value="ECO:0007669"/>
    <property type="project" value="UniProtKB-KW"/>
</dbReference>
<dbReference type="GO" id="GO:0019031">
    <property type="term" value="C:viral envelope"/>
    <property type="evidence" value="ECO:0007669"/>
    <property type="project" value="UniProtKB-KW"/>
</dbReference>
<dbReference type="GO" id="GO:0055036">
    <property type="term" value="C:virion membrane"/>
    <property type="evidence" value="ECO:0007669"/>
    <property type="project" value="UniProtKB-SubCell"/>
</dbReference>
<dbReference type="GO" id="GO:0019064">
    <property type="term" value="P:fusion of virus membrane with host plasma membrane"/>
    <property type="evidence" value="ECO:0007669"/>
    <property type="project" value="UniProtKB-KW"/>
</dbReference>
<dbReference type="GO" id="GO:0046718">
    <property type="term" value="P:symbiont entry into host cell"/>
    <property type="evidence" value="ECO:0007669"/>
    <property type="project" value="UniProtKB-KW"/>
</dbReference>
<dbReference type="GO" id="GO:0019062">
    <property type="term" value="P:virion attachment to host cell"/>
    <property type="evidence" value="ECO:0007669"/>
    <property type="project" value="UniProtKB-KW"/>
</dbReference>
<dbReference type="CDD" id="cd09851">
    <property type="entry name" value="HTLV-1-like_HR1-HR2"/>
    <property type="match status" value="1"/>
</dbReference>
<dbReference type="Gene3D" id="1.10.287.210">
    <property type="match status" value="1"/>
</dbReference>
<dbReference type="Gene3D" id="3.90.310.10">
    <property type="entry name" value="ENV polyprotein, receptor-binding domain"/>
    <property type="match status" value="1"/>
</dbReference>
<dbReference type="InterPro" id="IPR008981">
    <property type="entry name" value="FMuLV_rcpt-bd"/>
</dbReference>
<dbReference type="InterPro" id="IPR018154">
    <property type="entry name" value="TLV/ENV_coat_polyprotein"/>
</dbReference>
<dbReference type="PANTHER" id="PTHR10424:SF72">
    <property type="entry name" value="BC035947 PROTEIN-RELATED"/>
    <property type="match status" value="1"/>
</dbReference>
<dbReference type="PANTHER" id="PTHR10424">
    <property type="entry name" value="VIRAL ENVELOPE PROTEIN"/>
    <property type="match status" value="1"/>
</dbReference>
<dbReference type="Pfam" id="PF00429">
    <property type="entry name" value="TLV_coat"/>
    <property type="match status" value="1"/>
</dbReference>
<dbReference type="SUPFAM" id="SSF49830">
    <property type="entry name" value="ENV polyprotein, receptor-binding domain"/>
    <property type="match status" value="1"/>
</dbReference>
<dbReference type="SUPFAM" id="SSF58069">
    <property type="entry name" value="Virus ectodomain"/>
    <property type="match status" value="1"/>
</dbReference>
<gene>
    <name type="primary">env</name>
</gene>
<protein>
    <recommendedName>
        <fullName>Envelope glycoprotein</fullName>
    </recommendedName>
    <alternativeName>
        <fullName>Env polyprotein</fullName>
    </alternativeName>
    <component>
        <recommendedName>
            <fullName>Surface protein</fullName>
            <shortName>SU</shortName>
        </recommendedName>
        <alternativeName>
            <fullName>Glycoprotein 70</fullName>
            <shortName>gp70</shortName>
        </alternativeName>
    </component>
    <component>
        <recommendedName>
            <fullName>Transmembrane protein</fullName>
            <shortName>TM</shortName>
        </recommendedName>
        <alternativeName>
            <fullName>Envelope protein p15E</fullName>
        </alternativeName>
    </component>
    <component>
        <recommendedName>
            <fullName>R-peptide</fullName>
        </recommendedName>
        <alternativeName>
            <fullName>p2E</fullName>
        </alternativeName>
    </component>
</protein>
<sequence length="642" mass="71053">MESPTHPKPSKDKTLSWNLAFLVGILFTIDIGMANPSPHQIYNVTWVITNVQTNTQANATSMLGTLTDAYPTLHVDLCDLVGDTWEPIVLNPTNVKHGARYSSSKYGCKTTDRKKQQQTYPFYVCPGHAPSLGPKGTHCGGAQDGFCAAWGCETTGEAWWKPTSSWDYITVKRGSSQDNSCEGKCNPLVLQFTQKGRQASWDGPKMWGLRLYRTGYDPIALFTVSRQVSTITPPQAMGPNLVLPDQKPPSRQSQTGSKVATQRPQTNESAPRSVAPTTMGPKRIGTGDRLINLVQGTYLALNATDPNKTKDCWLCLVSRPPYYEGIAILGNYSNQTNPPPSCLSTPQHKLTISEVSGQGMCIGTVPKTHQALCNKTQQGHTGAHYLAAPNGTYWACNTGLTPCISMAVLNWTSDFCVLIELWPRVTYHQPEYVYTHFAKAVRFRREPISLTVALMLGGLTVGGIAAGVGTGTKALLETAQFRQLQMAMHTDIQALEESISALEKSLTSLSEVVLQNRRGLDILFLQEGGLCAALKEECCFYADHTGLVRDNMAKLRERLKQRQQLFDSQQGWFEGWFNKSPWFTTLISSIMGPLLILLLILLFGPCILNRLVQFVKDRISVVQALILTQQYQQIKQYDPDRP</sequence>